<evidence type="ECO:0000255" key="1">
    <source>
        <dbReference type="HAMAP-Rule" id="MF_00362"/>
    </source>
</evidence>
<evidence type="ECO:0000305" key="2"/>
<name>RL10_PROM5</name>
<feature type="chain" id="PRO_1000005558" description="Large ribosomal subunit protein uL10">
    <location>
        <begin position="1"/>
        <end position="175"/>
    </location>
</feature>
<accession>A2BUH9</accession>
<dbReference type="EMBL" id="CP000552">
    <property type="protein sequence ID" value="ABM71440.1"/>
    <property type="molecule type" value="Genomic_DNA"/>
</dbReference>
<dbReference type="RefSeq" id="WP_011819554.1">
    <property type="nucleotide sequence ID" value="NC_008817.1"/>
</dbReference>
<dbReference type="SMR" id="A2BUH9"/>
<dbReference type="STRING" id="167542.P9515_02311"/>
<dbReference type="GeneID" id="60200631"/>
<dbReference type="KEGG" id="pmc:P9515_02311"/>
<dbReference type="eggNOG" id="COG0244">
    <property type="taxonomic scope" value="Bacteria"/>
</dbReference>
<dbReference type="HOGENOM" id="CLU_092227_1_1_3"/>
<dbReference type="OrthoDB" id="9808307at2"/>
<dbReference type="Proteomes" id="UP000001589">
    <property type="component" value="Chromosome"/>
</dbReference>
<dbReference type="GO" id="GO:1990904">
    <property type="term" value="C:ribonucleoprotein complex"/>
    <property type="evidence" value="ECO:0007669"/>
    <property type="project" value="UniProtKB-KW"/>
</dbReference>
<dbReference type="GO" id="GO:0005840">
    <property type="term" value="C:ribosome"/>
    <property type="evidence" value="ECO:0007669"/>
    <property type="project" value="UniProtKB-KW"/>
</dbReference>
<dbReference type="GO" id="GO:0070180">
    <property type="term" value="F:large ribosomal subunit rRNA binding"/>
    <property type="evidence" value="ECO:0007669"/>
    <property type="project" value="UniProtKB-UniRule"/>
</dbReference>
<dbReference type="GO" id="GO:0006412">
    <property type="term" value="P:translation"/>
    <property type="evidence" value="ECO:0007669"/>
    <property type="project" value="UniProtKB-UniRule"/>
</dbReference>
<dbReference type="CDD" id="cd05797">
    <property type="entry name" value="Ribosomal_L10"/>
    <property type="match status" value="1"/>
</dbReference>
<dbReference type="Gene3D" id="3.30.70.1730">
    <property type="match status" value="1"/>
</dbReference>
<dbReference type="Gene3D" id="6.10.250.290">
    <property type="match status" value="1"/>
</dbReference>
<dbReference type="HAMAP" id="MF_00362">
    <property type="entry name" value="Ribosomal_uL10"/>
    <property type="match status" value="1"/>
</dbReference>
<dbReference type="InterPro" id="IPR001790">
    <property type="entry name" value="Ribosomal_uL10"/>
</dbReference>
<dbReference type="InterPro" id="IPR043141">
    <property type="entry name" value="Ribosomal_uL10-like_sf"/>
</dbReference>
<dbReference type="InterPro" id="IPR022973">
    <property type="entry name" value="Ribosomal_uL10_bac"/>
</dbReference>
<dbReference type="InterPro" id="IPR047865">
    <property type="entry name" value="Ribosomal_uL10_bac_type"/>
</dbReference>
<dbReference type="NCBIfam" id="NF000955">
    <property type="entry name" value="PRK00099.1-1"/>
    <property type="match status" value="1"/>
</dbReference>
<dbReference type="PANTHER" id="PTHR11560">
    <property type="entry name" value="39S RIBOSOMAL PROTEIN L10, MITOCHONDRIAL"/>
    <property type="match status" value="1"/>
</dbReference>
<dbReference type="Pfam" id="PF00466">
    <property type="entry name" value="Ribosomal_L10"/>
    <property type="match status" value="1"/>
</dbReference>
<dbReference type="SUPFAM" id="SSF160369">
    <property type="entry name" value="Ribosomal protein L10-like"/>
    <property type="match status" value="1"/>
</dbReference>
<comment type="function">
    <text evidence="1">Forms part of the ribosomal stalk, playing a central role in the interaction of the ribosome with GTP-bound translation factors.</text>
</comment>
<comment type="subunit">
    <text evidence="1">Part of the ribosomal stalk of the 50S ribosomal subunit. The N-terminus interacts with L11 and the large rRNA to form the base of the stalk. The C-terminus forms an elongated spine to which L12 dimers bind in a sequential fashion forming a multimeric L10(L12)X complex.</text>
</comment>
<comment type="similarity">
    <text evidence="1">Belongs to the universal ribosomal protein uL10 family.</text>
</comment>
<protein>
    <recommendedName>
        <fullName evidence="1">Large ribosomal subunit protein uL10</fullName>
    </recommendedName>
    <alternativeName>
        <fullName evidence="2">50S ribosomal protein L10</fullName>
    </alternativeName>
</protein>
<sequence>MGRTIENKQKIVTELKSLLDDSEMAVVLDYKGLTIKEMSDLRSRLQTNKGICKVTKNSLMRKAIDGNSNWTDLESLLTGTNAFVLIKEDVGGAVKAIQSFQKETKKSETKGALFEGRLLSQSEIKEIASLPSREVLMAKIAGALNGVATKIAISINEVPSGLARSLKQHSEKSES</sequence>
<gene>
    <name evidence="1" type="primary">rplJ</name>
    <name evidence="1" type="synonym">rpl10</name>
    <name type="ordered locus">P9515_02311</name>
</gene>
<reference key="1">
    <citation type="journal article" date="2007" name="PLoS Genet.">
        <title>Patterns and implications of gene gain and loss in the evolution of Prochlorococcus.</title>
        <authorList>
            <person name="Kettler G.C."/>
            <person name="Martiny A.C."/>
            <person name="Huang K."/>
            <person name="Zucker J."/>
            <person name="Coleman M.L."/>
            <person name="Rodrigue S."/>
            <person name="Chen F."/>
            <person name="Lapidus A."/>
            <person name="Ferriera S."/>
            <person name="Johnson J."/>
            <person name="Steglich C."/>
            <person name="Church G.M."/>
            <person name="Richardson P."/>
            <person name="Chisholm S.W."/>
        </authorList>
    </citation>
    <scope>NUCLEOTIDE SEQUENCE [LARGE SCALE GENOMIC DNA]</scope>
    <source>
        <strain>MIT 9515</strain>
    </source>
</reference>
<keyword id="KW-0687">Ribonucleoprotein</keyword>
<keyword id="KW-0689">Ribosomal protein</keyword>
<keyword id="KW-0694">RNA-binding</keyword>
<keyword id="KW-0699">rRNA-binding</keyword>
<organism>
    <name type="scientific">Prochlorococcus marinus (strain MIT 9515)</name>
    <dbReference type="NCBI Taxonomy" id="167542"/>
    <lineage>
        <taxon>Bacteria</taxon>
        <taxon>Bacillati</taxon>
        <taxon>Cyanobacteriota</taxon>
        <taxon>Cyanophyceae</taxon>
        <taxon>Synechococcales</taxon>
        <taxon>Prochlorococcaceae</taxon>
        <taxon>Prochlorococcus</taxon>
    </lineage>
</organism>
<proteinExistence type="inferred from homology"/>